<gene>
    <name evidence="1" type="primary">gpsA</name>
    <name type="ordered locus">SO_0053</name>
</gene>
<protein>
    <recommendedName>
        <fullName evidence="1">Glycerol-3-phosphate dehydrogenase [NAD(P)+]</fullName>
        <ecNumber evidence="1">1.1.1.94</ecNumber>
    </recommendedName>
    <alternativeName>
        <fullName evidence="1">NAD(P)(+)-dependent glycerol-3-phosphate dehydrogenase</fullName>
    </alternativeName>
    <alternativeName>
        <fullName evidence="1">NAD(P)H-dependent dihydroxyacetone-phosphate reductase</fullName>
    </alternativeName>
</protein>
<organism>
    <name type="scientific">Shewanella oneidensis (strain ATCC 700550 / JCM 31522 / CIP 106686 / LMG 19005 / NCIMB 14063 / MR-1)</name>
    <dbReference type="NCBI Taxonomy" id="211586"/>
    <lineage>
        <taxon>Bacteria</taxon>
        <taxon>Pseudomonadati</taxon>
        <taxon>Pseudomonadota</taxon>
        <taxon>Gammaproteobacteria</taxon>
        <taxon>Alteromonadales</taxon>
        <taxon>Shewanellaceae</taxon>
        <taxon>Shewanella</taxon>
    </lineage>
</organism>
<comment type="function">
    <text evidence="1">Catalyzes the reduction of the glycolytic intermediate dihydroxyacetone phosphate (DHAP) to sn-glycerol 3-phosphate (G3P), the key precursor for phospholipid synthesis.</text>
</comment>
<comment type="catalytic activity">
    <reaction evidence="1">
        <text>sn-glycerol 3-phosphate + NAD(+) = dihydroxyacetone phosphate + NADH + H(+)</text>
        <dbReference type="Rhea" id="RHEA:11092"/>
        <dbReference type="ChEBI" id="CHEBI:15378"/>
        <dbReference type="ChEBI" id="CHEBI:57540"/>
        <dbReference type="ChEBI" id="CHEBI:57597"/>
        <dbReference type="ChEBI" id="CHEBI:57642"/>
        <dbReference type="ChEBI" id="CHEBI:57945"/>
        <dbReference type="EC" id="1.1.1.94"/>
    </reaction>
    <physiologicalReaction direction="right-to-left" evidence="1">
        <dbReference type="Rhea" id="RHEA:11094"/>
    </physiologicalReaction>
</comment>
<comment type="catalytic activity">
    <reaction evidence="1">
        <text>sn-glycerol 3-phosphate + NADP(+) = dihydroxyacetone phosphate + NADPH + H(+)</text>
        <dbReference type="Rhea" id="RHEA:11096"/>
        <dbReference type="ChEBI" id="CHEBI:15378"/>
        <dbReference type="ChEBI" id="CHEBI:57597"/>
        <dbReference type="ChEBI" id="CHEBI:57642"/>
        <dbReference type="ChEBI" id="CHEBI:57783"/>
        <dbReference type="ChEBI" id="CHEBI:58349"/>
        <dbReference type="EC" id="1.1.1.94"/>
    </reaction>
    <physiologicalReaction direction="right-to-left" evidence="1">
        <dbReference type="Rhea" id="RHEA:11098"/>
    </physiologicalReaction>
</comment>
<comment type="pathway">
    <text evidence="1">Membrane lipid metabolism; glycerophospholipid metabolism.</text>
</comment>
<comment type="subcellular location">
    <subcellularLocation>
        <location evidence="1">Cytoplasm</location>
    </subcellularLocation>
</comment>
<comment type="similarity">
    <text evidence="1">Belongs to the NAD-dependent glycerol-3-phosphate dehydrogenase family.</text>
</comment>
<keyword id="KW-0963">Cytoplasm</keyword>
<keyword id="KW-0444">Lipid biosynthesis</keyword>
<keyword id="KW-0443">Lipid metabolism</keyword>
<keyword id="KW-0520">NAD</keyword>
<keyword id="KW-0521">NADP</keyword>
<keyword id="KW-0547">Nucleotide-binding</keyword>
<keyword id="KW-0560">Oxidoreductase</keyword>
<keyword id="KW-0594">Phospholipid biosynthesis</keyword>
<keyword id="KW-1208">Phospholipid metabolism</keyword>
<keyword id="KW-1185">Reference proteome</keyword>
<sequence length="338" mass="35778">MNNSADITVLGAGSYGTALAISLASNGHKTLLWGHDPAHMQTLAEDKCNQAFLPGIAFPECLHIEADLAKALAASNNVLVVVPSHVFGTVLAQAKPLLRQDARIVWATKGLEPETGRLLQDVARDVLGEQYPLAVLSGPTFAKELAMGLPTAISVAGTCPQFTAELVELLHSPKRLRVYANDDFIGLQLGGAVKNVIAIGAGMSDGIGFGANARTALITRGLVELTRLGEALGASTATFMGMAGLGDLVLTCTDNQSRNRRFGLALGKGCDVDTAQVEIGQVVEGYRNTKEVFTLAKRLGVEMPITEQIYQVLYQGKSPVDAAKELLGREKKSETPTQ</sequence>
<dbReference type="EC" id="1.1.1.94" evidence="1"/>
<dbReference type="EMBL" id="AE014299">
    <property type="protein sequence ID" value="AAN53140.1"/>
    <property type="molecule type" value="Genomic_DNA"/>
</dbReference>
<dbReference type="RefSeq" id="NP_715695.1">
    <property type="nucleotide sequence ID" value="NC_004347.2"/>
</dbReference>
<dbReference type="RefSeq" id="WP_011070467.1">
    <property type="nucleotide sequence ID" value="NC_004347.2"/>
</dbReference>
<dbReference type="SMR" id="Q8EKN9"/>
<dbReference type="STRING" id="211586.SO_0053"/>
<dbReference type="PaxDb" id="211586-SO_0053"/>
<dbReference type="KEGG" id="son:SO_0053"/>
<dbReference type="PATRIC" id="fig|211586.12.peg.53"/>
<dbReference type="eggNOG" id="COG0240">
    <property type="taxonomic scope" value="Bacteria"/>
</dbReference>
<dbReference type="HOGENOM" id="CLU_033449_0_2_6"/>
<dbReference type="OrthoDB" id="9812273at2"/>
<dbReference type="PhylomeDB" id="Q8EKN9"/>
<dbReference type="BioCyc" id="SONE211586:G1GMP-55-MONOMER"/>
<dbReference type="UniPathway" id="UPA00940"/>
<dbReference type="Proteomes" id="UP000008186">
    <property type="component" value="Chromosome"/>
</dbReference>
<dbReference type="GO" id="GO:0005829">
    <property type="term" value="C:cytosol"/>
    <property type="evidence" value="ECO:0000318"/>
    <property type="project" value="GO_Central"/>
</dbReference>
<dbReference type="GO" id="GO:0047952">
    <property type="term" value="F:glycerol-3-phosphate dehydrogenase [NAD(P)+] activity"/>
    <property type="evidence" value="ECO:0000318"/>
    <property type="project" value="GO_Central"/>
</dbReference>
<dbReference type="GO" id="GO:0051287">
    <property type="term" value="F:NAD binding"/>
    <property type="evidence" value="ECO:0007669"/>
    <property type="project" value="InterPro"/>
</dbReference>
<dbReference type="GO" id="GO:0005975">
    <property type="term" value="P:carbohydrate metabolic process"/>
    <property type="evidence" value="ECO:0007669"/>
    <property type="project" value="InterPro"/>
</dbReference>
<dbReference type="GO" id="GO:0046167">
    <property type="term" value="P:glycerol-3-phosphate biosynthetic process"/>
    <property type="evidence" value="ECO:0007669"/>
    <property type="project" value="UniProtKB-UniRule"/>
</dbReference>
<dbReference type="GO" id="GO:0046168">
    <property type="term" value="P:glycerol-3-phosphate catabolic process"/>
    <property type="evidence" value="ECO:0007669"/>
    <property type="project" value="InterPro"/>
</dbReference>
<dbReference type="GO" id="GO:0006072">
    <property type="term" value="P:glycerol-3-phosphate metabolic process"/>
    <property type="evidence" value="ECO:0000318"/>
    <property type="project" value="GO_Central"/>
</dbReference>
<dbReference type="GO" id="GO:0046474">
    <property type="term" value="P:glycerophospholipid biosynthetic process"/>
    <property type="evidence" value="ECO:0000318"/>
    <property type="project" value="GO_Central"/>
</dbReference>
<dbReference type="FunFam" id="1.10.1040.10:FF:000001">
    <property type="entry name" value="Glycerol-3-phosphate dehydrogenase [NAD(P)+]"/>
    <property type="match status" value="1"/>
</dbReference>
<dbReference type="FunFam" id="3.40.50.720:FF:000019">
    <property type="entry name" value="Glycerol-3-phosphate dehydrogenase [NAD(P)+]"/>
    <property type="match status" value="1"/>
</dbReference>
<dbReference type="Gene3D" id="1.10.1040.10">
    <property type="entry name" value="N-(1-d-carboxylethyl)-l-norvaline Dehydrogenase, domain 2"/>
    <property type="match status" value="1"/>
</dbReference>
<dbReference type="Gene3D" id="3.40.50.720">
    <property type="entry name" value="NAD(P)-binding Rossmann-like Domain"/>
    <property type="match status" value="1"/>
</dbReference>
<dbReference type="HAMAP" id="MF_00394">
    <property type="entry name" value="NAD_Glyc3P_dehydrog"/>
    <property type="match status" value="1"/>
</dbReference>
<dbReference type="InterPro" id="IPR008927">
    <property type="entry name" value="6-PGluconate_DH-like_C_sf"/>
</dbReference>
<dbReference type="InterPro" id="IPR013328">
    <property type="entry name" value="6PGD_dom2"/>
</dbReference>
<dbReference type="InterPro" id="IPR006168">
    <property type="entry name" value="G3P_DH_NAD-dep"/>
</dbReference>
<dbReference type="InterPro" id="IPR006109">
    <property type="entry name" value="G3P_DH_NAD-dep_C"/>
</dbReference>
<dbReference type="InterPro" id="IPR011128">
    <property type="entry name" value="G3P_DH_NAD-dep_N"/>
</dbReference>
<dbReference type="InterPro" id="IPR036291">
    <property type="entry name" value="NAD(P)-bd_dom_sf"/>
</dbReference>
<dbReference type="NCBIfam" id="NF000939">
    <property type="entry name" value="PRK00094.1-1"/>
    <property type="match status" value="1"/>
</dbReference>
<dbReference type="NCBIfam" id="NF000940">
    <property type="entry name" value="PRK00094.1-2"/>
    <property type="match status" value="1"/>
</dbReference>
<dbReference type="NCBIfam" id="NF000942">
    <property type="entry name" value="PRK00094.1-4"/>
    <property type="match status" value="1"/>
</dbReference>
<dbReference type="PANTHER" id="PTHR11728">
    <property type="entry name" value="GLYCEROL-3-PHOSPHATE DEHYDROGENASE"/>
    <property type="match status" value="1"/>
</dbReference>
<dbReference type="PANTHER" id="PTHR11728:SF1">
    <property type="entry name" value="GLYCEROL-3-PHOSPHATE DEHYDROGENASE [NAD(+)] 2, CHLOROPLASTIC"/>
    <property type="match status" value="1"/>
</dbReference>
<dbReference type="Pfam" id="PF07479">
    <property type="entry name" value="NAD_Gly3P_dh_C"/>
    <property type="match status" value="1"/>
</dbReference>
<dbReference type="Pfam" id="PF01210">
    <property type="entry name" value="NAD_Gly3P_dh_N"/>
    <property type="match status" value="1"/>
</dbReference>
<dbReference type="PIRSF" id="PIRSF000114">
    <property type="entry name" value="Glycerol-3-P_dh"/>
    <property type="match status" value="1"/>
</dbReference>
<dbReference type="PRINTS" id="PR00077">
    <property type="entry name" value="GPDHDRGNASE"/>
</dbReference>
<dbReference type="SUPFAM" id="SSF48179">
    <property type="entry name" value="6-phosphogluconate dehydrogenase C-terminal domain-like"/>
    <property type="match status" value="1"/>
</dbReference>
<dbReference type="SUPFAM" id="SSF51735">
    <property type="entry name" value="NAD(P)-binding Rossmann-fold domains"/>
    <property type="match status" value="1"/>
</dbReference>
<dbReference type="PROSITE" id="PS00957">
    <property type="entry name" value="NAD_G3PDH"/>
    <property type="match status" value="1"/>
</dbReference>
<proteinExistence type="inferred from homology"/>
<evidence type="ECO:0000255" key="1">
    <source>
        <dbReference type="HAMAP-Rule" id="MF_00394"/>
    </source>
</evidence>
<reference key="1">
    <citation type="journal article" date="2002" name="Nat. Biotechnol.">
        <title>Genome sequence of the dissimilatory metal ion-reducing bacterium Shewanella oneidensis.</title>
        <authorList>
            <person name="Heidelberg J.F."/>
            <person name="Paulsen I.T."/>
            <person name="Nelson K.E."/>
            <person name="Gaidos E.J."/>
            <person name="Nelson W.C."/>
            <person name="Read T.D."/>
            <person name="Eisen J.A."/>
            <person name="Seshadri R."/>
            <person name="Ward N.L."/>
            <person name="Methe B.A."/>
            <person name="Clayton R.A."/>
            <person name="Meyer T."/>
            <person name="Tsapin A."/>
            <person name="Scott J."/>
            <person name="Beanan M.J."/>
            <person name="Brinkac L.M."/>
            <person name="Daugherty S.C."/>
            <person name="DeBoy R.T."/>
            <person name="Dodson R.J."/>
            <person name="Durkin A.S."/>
            <person name="Haft D.H."/>
            <person name="Kolonay J.F."/>
            <person name="Madupu R."/>
            <person name="Peterson J.D."/>
            <person name="Umayam L.A."/>
            <person name="White O."/>
            <person name="Wolf A.M."/>
            <person name="Vamathevan J.J."/>
            <person name="Weidman J.F."/>
            <person name="Impraim M."/>
            <person name="Lee K."/>
            <person name="Berry K.J."/>
            <person name="Lee C."/>
            <person name="Mueller J."/>
            <person name="Khouri H.M."/>
            <person name="Gill J."/>
            <person name="Utterback T.R."/>
            <person name="McDonald L.A."/>
            <person name="Feldblyum T.V."/>
            <person name="Smith H.O."/>
            <person name="Venter J.C."/>
            <person name="Nealson K.H."/>
            <person name="Fraser C.M."/>
        </authorList>
    </citation>
    <scope>NUCLEOTIDE SEQUENCE [LARGE SCALE GENOMIC DNA]</scope>
    <source>
        <strain>ATCC 700550 / JCM 31522 / CIP 106686 / LMG 19005 / NCIMB 14063 / MR-1</strain>
    </source>
</reference>
<feature type="chain" id="PRO_0000138021" description="Glycerol-3-phosphate dehydrogenase [NAD(P)+]">
    <location>
        <begin position="1"/>
        <end position="338"/>
    </location>
</feature>
<feature type="active site" description="Proton acceptor" evidence="1">
    <location>
        <position position="194"/>
    </location>
</feature>
<feature type="binding site" evidence="1">
    <location>
        <position position="14"/>
    </location>
    <ligand>
        <name>NADPH</name>
        <dbReference type="ChEBI" id="CHEBI:57783"/>
    </ligand>
</feature>
<feature type="binding site" evidence="1">
    <location>
        <position position="15"/>
    </location>
    <ligand>
        <name>NADPH</name>
        <dbReference type="ChEBI" id="CHEBI:57783"/>
    </ligand>
</feature>
<feature type="binding site" evidence="1">
    <location>
        <position position="35"/>
    </location>
    <ligand>
        <name>NADPH</name>
        <dbReference type="ChEBI" id="CHEBI:57783"/>
    </ligand>
</feature>
<feature type="binding site" evidence="1">
    <location>
        <position position="109"/>
    </location>
    <ligand>
        <name>NADPH</name>
        <dbReference type="ChEBI" id="CHEBI:57783"/>
    </ligand>
</feature>
<feature type="binding site" evidence="1">
    <location>
        <position position="109"/>
    </location>
    <ligand>
        <name>sn-glycerol 3-phosphate</name>
        <dbReference type="ChEBI" id="CHEBI:57597"/>
    </ligand>
</feature>
<feature type="binding site" evidence="1">
    <location>
        <position position="138"/>
    </location>
    <ligand>
        <name>sn-glycerol 3-phosphate</name>
        <dbReference type="ChEBI" id="CHEBI:57597"/>
    </ligand>
</feature>
<feature type="binding site" evidence="1">
    <location>
        <position position="140"/>
    </location>
    <ligand>
        <name>sn-glycerol 3-phosphate</name>
        <dbReference type="ChEBI" id="CHEBI:57597"/>
    </ligand>
</feature>
<feature type="binding site" evidence="1">
    <location>
        <position position="142"/>
    </location>
    <ligand>
        <name>NADPH</name>
        <dbReference type="ChEBI" id="CHEBI:57783"/>
    </ligand>
</feature>
<feature type="binding site" evidence="1">
    <location>
        <position position="194"/>
    </location>
    <ligand>
        <name>sn-glycerol 3-phosphate</name>
        <dbReference type="ChEBI" id="CHEBI:57597"/>
    </ligand>
</feature>
<feature type="binding site" evidence="1">
    <location>
        <position position="247"/>
    </location>
    <ligand>
        <name>sn-glycerol 3-phosphate</name>
        <dbReference type="ChEBI" id="CHEBI:57597"/>
    </ligand>
</feature>
<feature type="binding site" evidence="1">
    <location>
        <position position="257"/>
    </location>
    <ligand>
        <name>sn-glycerol 3-phosphate</name>
        <dbReference type="ChEBI" id="CHEBI:57597"/>
    </ligand>
</feature>
<feature type="binding site" evidence="1">
    <location>
        <position position="258"/>
    </location>
    <ligand>
        <name>NADPH</name>
        <dbReference type="ChEBI" id="CHEBI:57783"/>
    </ligand>
</feature>
<feature type="binding site" evidence="1">
    <location>
        <position position="258"/>
    </location>
    <ligand>
        <name>sn-glycerol 3-phosphate</name>
        <dbReference type="ChEBI" id="CHEBI:57597"/>
    </ligand>
</feature>
<feature type="binding site" evidence="1">
    <location>
        <position position="259"/>
    </location>
    <ligand>
        <name>sn-glycerol 3-phosphate</name>
        <dbReference type="ChEBI" id="CHEBI:57597"/>
    </ligand>
</feature>
<feature type="binding site" evidence="1">
    <location>
        <position position="282"/>
    </location>
    <ligand>
        <name>NADPH</name>
        <dbReference type="ChEBI" id="CHEBI:57783"/>
    </ligand>
</feature>
<feature type="binding site" evidence="1">
    <location>
        <position position="284"/>
    </location>
    <ligand>
        <name>NADPH</name>
        <dbReference type="ChEBI" id="CHEBI:57783"/>
    </ligand>
</feature>
<accession>Q8EKN9</accession>
<name>GPDA_SHEON</name>